<gene>
    <name evidence="1" type="primary">thrB</name>
    <name type="ordered locus">SF0003</name>
    <name type="ordered locus">S0003</name>
</gene>
<feature type="chain" id="PRO_0000156603" description="Homoserine kinase">
    <location>
        <begin position="1"/>
        <end position="310"/>
    </location>
</feature>
<feature type="binding site" evidence="1">
    <location>
        <begin position="91"/>
        <end position="101"/>
    </location>
    <ligand>
        <name>ATP</name>
        <dbReference type="ChEBI" id="CHEBI:30616"/>
    </ligand>
</feature>
<protein>
    <recommendedName>
        <fullName evidence="1">Homoserine kinase</fullName>
        <shortName evidence="1">HK</shortName>
        <shortName evidence="1">HSK</shortName>
        <ecNumber evidence="1">2.7.1.39</ecNumber>
    </recommendedName>
</protein>
<dbReference type="EC" id="2.7.1.39" evidence="1"/>
<dbReference type="EMBL" id="AE005674">
    <property type="protein sequence ID" value="AAN41670.1"/>
    <property type="molecule type" value="Genomic_DNA"/>
</dbReference>
<dbReference type="EMBL" id="AE014073">
    <property type="protein sequence ID" value="AAP15550.1"/>
    <property type="molecule type" value="Genomic_DNA"/>
</dbReference>
<dbReference type="RefSeq" id="NP_705963.1">
    <property type="nucleotide sequence ID" value="NC_004337.2"/>
</dbReference>
<dbReference type="RefSeq" id="WP_000241642.1">
    <property type="nucleotide sequence ID" value="NZ_WHSI01000024.1"/>
</dbReference>
<dbReference type="SMR" id="Q83MH9"/>
<dbReference type="STRING" id="198214.SF0003"/>
<dbReference type="PaxDb" id="198214-SF0003"/>
<dbReference type="GeneID" id="1027257"/>
<dbReference type="KEGG" id="sfl:SF0003"/>
<dbReference type="KEGG" id="sfx:S0003"/>
<dbReference type="PATRIC" id="fig|198214.7.peg.2"/>
<dbReference type="HOGENOM" id="CLU_041243_1_1_6"/>
<dbReference type="UniPathway" id="UPA00050">
    <property type="reaction ID" value="UER00064"/>
</dbReference>
<dbReference type="Proteomes" id="UP000001006">
    <property type="component" value="Chromosome"/>
</dbReference>
<dbReference type="Proteomes" id="UP000002673">
    <property type="component" value="Chromosome"/>
</dbReference>
<dbReference type="GO" id="GO:0005737">
    <property type="term" value="C:cytoplasm"/>
    <property type="evidence" value="ECO:0007669"/>
    <property type="project" value="UniProtKB-SubCell"/>
</dbReference>
<dbReference type="GO" id="GO:0005524">
    <property type="term" value="F:ATP binding"/>
    <property type="evidence" value="ECO:0007669"/>
    <property type="project" value="UniProtKB-UniRule"/>
</dbReference>
<dbReference type="GO" id="GO:0004413">
    <property type="term" value="F:homoserine kinase activity"/>
    <property type="evidence" value="ECO:0007669"/>
    <property type="project" value="UniProtKB-UniRule"/>
</dbReference>
<dbReference type="GO" id="GO:0009088">
    <property type="term" value="P:threonine biosynthetic process"/>
    <property type="evidence" value="ECO:0007669"/>
    <property type="project" value="UniProtKB-UniRule"/>
</dbReference>
<dbReference type="FunFam" id="3.30.230.10:FF:000020">
    <property type="entry name" value="Homoserine kinase"/>
    <property type="match status" value="1"/>
</dbReference>
<dbReference type="FunFam" id="3.30.70.890:FF:000002">
    <property type="entry name" value="Homoserine kinase"/>
    <property type="match status" value="1"/>
</dbReference>
<dbReference type="Gene3D" id="3.30.230.10">
    <property type="match status" value="1"/>
</dbReference>
<dbReference type="Gene3D" id="3.30.70.890">
    <property type="entry name" value="GHMP kinase, C-terminal domain"/>
    <property type="match status" value="1"/>
</dbReference>
<dbReference type="HAMAP" id="MF_00384">
    <property type="entry name" value="Homoser_kinase"/>
    <property type="match status" value="1"/>
</dbReference>
<dbReference type="InterPro" id="IPR013750">
    <property type="entry name" value="GHMP_kinase_C_dom"/>
</dbReference>
<dbReference type="InterPro" id="IPR036554">
    <property type="entry name" value="GHMP_kinase_C_sf"/>
</dbReference>
<dbReference type="InterPro" id="IPR006204">
    <property type="entry name" value="GHMP_kinase_N_dom"/>
</dbReference>
<dbReference type="InterPro" id="IPR006203">
    <property type="entry name" value="GHMP_knse_ATP-bd_CS"/>
</dbReference>
<dbReference type="InterPro" id="IPR000870">
    <property type="entry name" value="Homoserine_kinase"/>
</dbReference>
<dbReference type="InterPro" id="IPR020568">
    <property type="entry name" value="Ribosomal_Su5_D2-typ_SF"/>
</dbReference>
<dbReference type="InterPro" id="IPR014721">
    <property type="entry name" value="Ribsml_uS5_D2-typ_fold_subgr"/>
</dbReference>
<dbReference type="NCBIfam" id="NF002288">
    <property type="entry name" value="PRK01212.1-4"/>
    <property type="match status" value="1"/>
</dbReference>
<dbReference type="NCBIfam" id="TIGR00191">
    <property type="entry name" value="thrB"/>
    <property type="match status" value="1"/>
</dbReference>
<dbReference type="PANTHER" id="PTHR20861:SF1">
    <property type="entry name" value="HOMOSERINE KINASE"/>
    <property type="match status" value="1"/>
</dbReference>
<dbReference type="PANTHER" id="PTHR20861">
    <property type="entry name" value="HOMOSERINE/4-DIPHOSPHOCYTIDYL-2-C-METHYL-D-ERYTHRITOL KINASE"/>
    <property type="match status" value="1"/>
</dbReference>
<dbReference type="Pfam" id="PF08544">
    <property type="entry name" value="GHMP_kinases_C"/>
    <property type="match status" value="1"/>
</dbReference>
<dbReference type="Pfam" id="PF00288">
    <property type="entry name" value="GHMP_kinases_N"/>
    <property type="match status" value="1"/>
</dbReference>
<dbReference type="PIRSF" id="PIRSF000676">
    <property type="entry name" value="Homoser_kin"/>
    <property type="match status" value="1"/>
</dbReference>
<dbReference type="PRINTS" id="PR00958">
    <property type="entry name" value="HOMSERKINASE"/>
</dbReference>
<dbReference type="SUPFAM" id="SSF55060">
    <property type="entry name" value="GHMP Kinase, C-terminal domain"/>
    <property type="match status" value="1"/>
</dbReference>
<dbReference type="SUPFAM" id="SSF54211">
    <property type="entry name" value="Ribosomal protein S5 domain 2-like"/>
    <property type="match status" value="1"/>
</dbReference>
<dbReference type="PROSITE" id="PS00627">
    <property type="entry name" value="GHMP_KINASES_ATP"/>
    <property type="match status" value="1"/>
</dbReference>
<comment type="function">
    <text evidence="1">Catalyzes the ATP-dependent phosphorylation of L-homoserine to L-homoserine phosphate.</text>
</comment>
<comment type="catalytic activity">
    <reaction evidence="1">
        <text>L-homoserine + ATP = O-phospho-L-homoserine + ADP + H(+)</text>
        <dbReference type="Rhea" id="RHEA:13985"/>
        <dbReference type="ChEBI" id="CHEBI:15378"/>
        <dbReference type="ChEBI" id="CHEBI:30616"/>
        <dbReference type="ChEBI" id="CHEBI:57476"/>
        <dbReference type="ChEBI" id="CHEBI:57590"/>
        <dbReference type="ChEBI" id="CHEBI:456216"/>
        <dbReference type="EC" id="2.7.1.39"/>
    </reaction>
</comment>
<comment type="pathway">
    <text evidence="1">Amino-acid biosynthesis; L-threonine biosynthesis; L-threonine from L-aspartate: step 4/5.</text>
</comment>
<comment type="subcellular location">
    <subcellularLocation>
        <location evidence="1">Cytoplasm</location>
    </subcellularLocation>
</comment>
<comment type="similarity">
    <text evidence="1">Belongs to the GHMP kinase family. Homoserine kinase subfamily.</text>
</comment>
<accession>Q83MH9</accession>
<accession>Q7C3C9</accession>
<organism>
    <name type="scientific">Shigella flexneri</name>
    <dbReference type="NCBI Taxonomy" id="623"/>
    <lineage>
        <taxon>Bacteria</taxon>
        <taxon>Pseudomonadati</taxon>
        <taxon>Pseudomonadota</taxon>
        <taxon>Gammaproteobacteria</taxon>
        <taxon>Enterobacterales</taxon>
        <taxon>Enterobacteriaceae</taxon>
        <taxon>Shigella</taxon>
    </lineage>
</organism>
<proteinExistence type="inferred from homology"/>
<reference key="1">
    <citation type="journal article" date="2002" name="Nucleic Acids Res.">
        <title>Genome sequence of Shigella flexneri 2a: insights into pathogenicity through comparison with genomes of Escherichia coli K12 and O157.</title>
        <authorList>
            <person name="Jin Q."/>
            <person name="Yuan Z."/>
            <person name="Xu J."/>
            <person name="Wang Y."/>
            <person name="Shen Y."/>
            <person name="Lu W."/>
            <person name="Wang J."/>
            <person name="Liu H."/>
            <person name="Yang J."/>
            <person name="Yang F."/>
            <person name="Zhang X."/>
            <person name="Zhang J."/>
            <person name="Yang G."/>
            <person name="Wu H."/>
            <person name="Qu D."/>
            <person name="Dong J."/>
            <person name="Sun L."/>
            <person name="Xue Y."/>
            <person name="Zhao A."/>
            <person name="Gao Y."/>
            <person name="Zhu J."/>
            <person name="Kan B."/>
            <person name="Ding K."/>
            <person name="Chen S."/>
            <person name="Cheng H."/>
            <person name="Yao Z."/>
            <person name="He B."/>
            <person name="Chen R."/>
            <person name="Ma D."/>
            <person name="Qiang B."/>
            <person name="Wen Y."/>
            <person name="Hou Y."/>
            <person name="Yu J."/>
        </authorList>
    </citation>
    <scope>NUCLEOTIDE SEQUENCE [LARGE SCALE GENOMIC DNA]</scope>
    <source>
        <strain>301 / Serotype 2a</strain>
    </source>
</reference>
<reference key="2">
    <citation type="journal article" date="2003" name="Infect. Immun.">
        <title>Complete genome sequence and comparative genomics of Shigella flexneri serotype 2a strain 2457T.</title>
        <authorList>
            <person name="Wei J."/>
            <person name="Goldberg M.B."/>
            <person name="Burland V."/>
            <person name="Venkatesan M.M."/>
            <person name="Deng W."/>
            <person name="Fournier G."/>
            <person name="Mayhew G.F."/>
            <person name="Plunkett G. III"/>
            <person name="Rose D.J."/>
            <person name="Darling A."/>
            <person name="Mau B."/>
            <person name="Perna N.T."/>
            <person name="Payne S.M."/>
            <person name="Runyen-Janecky L.J."/>
            <person name="Zhou S."/>
            <person name="Schwartz D.C."/>
            <person name="Blattner F.R."/>
        </authorList>
    </citation>
    <scope>NUCLEOTIDE SEQUENCE [LARGE SCALE GENOMIC DNA]</scope>
    <source>
        <strain>ATCC 700930 / 2457T / Serotype 2a</strain>
    </source>
</reference>
<name>KHSE_SHIFL</name>
<evidence type="ECO:0000255" key="1">
    <source>
        <dbReference type="HAMAP-Rule" id="MF_00384"/>
    </source>
</evidence>
<keyword id="KW-0028">Amino-acid biosynthesis</keyword>
<keyword id="KW-0067">ATP-binding</keyword>
<keyword id="KW-0963">Cytoplasm</keyword>
<keyword id="KW-0418">Kinase</keyword>
<keyword id="KW-0547">Nucleotide-binding</keyword>
<keyword id="KW-1185">Reference proteome</keyword>
<keyword id="KW-0791">Threonine biosynthesis</keyword>
<keyword id="KW-0808">Transferase</keyword>
<sequence>MVKVYAPASSANMSVGFDVLGAAVAPVDGALLGDVVTVEAAETFSLNNLGRFADKLPSEPRENIVYQCWERFCQELGKQIPVAMTLEKNMPIGSGLGSSACSVVAALMAMNEHCGKPLNDTRLLALMGELEGRISGSIHYDNVAPCFLGGMQLMIEENDIISQQVPGFDEWLWVLAYPGIKVSTAEARAILPAQYRRQDCIAHGRHLAGFIHACYSRQPELAAKLMKDVIAEPYRERLLPGFRQARQAVAEIGAVASGISGSGPTLFALCDKPDTAQRVADWLGKNYLQNQEGFVHICRLDTAGARVLEN</sequence>